<protein>
    <recommendedName>
        <fullName>Turripeptide Lol6.2</fullName>
    </recommendedName>
    <alternativeName>
        <fullName>OL25</fullName>
    </alternativeName>
</protein>
<dbReference type="GO" id="GO:0005576">
    <property type="term" value="C:extracellular region"/>
    <property type="evidence" value="ECO:0007669"/>
    <property type="project" value="UniProtKB-SubCell"/>
</dbReference>
<dbReference type="GO" id="GO:0099106">
    <property type="term" value="F:ion channel regulator activity"/>
    <property type="evidence" value="ECO:0007669"/>
    <property type="project" value="UniProtKB-KW"/>
</dbReference>
<dbReference type="GO" id="GO:0090729">
    <property type="term" value="F:toxin activity"/>
    <property type="evidence" value="ECO:0007669"/>
    <property type="project" value="UniProtKB-KW"/>
</dbReference>
<name>TU25_IOTOL</name>
<comment type="function">
    <text evidence="1">Acts as a neurotoxin by inhibiting an ion channel.</text>
</comment>
<comment type="subcellular location">
    <subcellularLocation>
        <location evidence="1">Secreted</location>
    </subcellularLocation>
</comment>
<comment type="tissue specificity">
    <text>Expressed by the venom duct.</text>
</comment>
<comment type="domain">
    <text>The cysteine framework is VI/VII (C-C-CC-C-C).</text>
</comment>
<comment type="domain">
    <text evidence="1">The presence of a 'disulfide through disulfide knot' structurally defines this protein as a knottin.</text>
</comment>
<feature type="chain" id="PRO_0000419838" description="Turripeptide Lol6.2">
    <location>
        <begin position="1"/>
        <end position="37"/>
    </location>
</feature>
<feature type="disulfide bond" evidence="1">
    <location>
        <begin position="4"/>
        <end position="16"/>
    </location>
</feature>
<feature type="disulfide bond" evidence="1">
    <location>
        <begin position="8"/>
        <end position="21"/>
    </location>
</feature>
<feature type="disulfide bond" evidence="1">
    <location>
        <begin position="15"/>
        <end position="29"/>
    </location>
</feature>
<keyword id="KW-1015">Disulfide bond</keyword>
<keyword id="KW-0872">Ion channel impairing toxin</keyword>
<keyword id="KW-0960">Knottin</keyword>
<keyword id="KW-0528">Neurotoxin</keyword>
<keyword id="KW-0964">Secreted</keyword>
<keyword id="KW-0800">Toxin</keyword>
<evidence type="ECO:0000250" key="1"/>
<organism>
    <name type="scientific">Iotyrris olangoensis</name>
    <name type="common">Sea snail</name>
    <name type="synonym">Lophiotoma olangoensis</name>
    <dbReference type="NCBI Taxonomy" id="2420066"/>
    <lineage>
        <taxon>Eukaryota</taxon>
        <taxon>Metazoa</taxon>
        <taxon>Spiralia</taxon>
        <taxon>Lophotrochozoa</taxon>
        <taxon>Mollusca</taxon>
        <taxon>Gastropoda</taxon>
        <taxon>Caenogastropoda</taxon>
        <taxon>Neogastropoda</taxon>
        <taxon>Conoidea</taxon>
        <taxon>Turridae</taxon>
        <taxon>Iotyrris</taxon>
    </lineage>
</organism>
<reference key="1">
    <citation type="journal article" date="2006" name="J. Mol. Evol.">
        <title>Genes expressed in a turrid venom duct: divergence and similarity to conotoxins.</title>
        <authorList>
            <person name="Watkins M."/>
            <person name="Hillyard D.R."/>
            <person name="Olivera B.M."/>
        </authorList>
    </citation>
    <scope>NUCLEOTIDE SEQUENCE [MRNA]</scope>
    <source>
        <tissue>Venom duct</tissue>
    </source>
</reference>
<accession>P0DKM4</accession>
<proteinExistence type="evidence at transcript level"/>
<sequence length="37" mass="3828">SLVCDLECSAEVTTCCETGTCHGITTYNCVGGTEPET</sequence>